<protein>
    <recommendedName>
        <fullName evidence="3">Fusarinine C esterase sidJ</fullName>
        <ecNumber evidence="2">3.1.-.-</ecNumber>
    </recommendedName>
</protein>
<gene>
    <name evidence="3" type="primary">sidJ</name>
    <name type="ORF">AFUA_3G03390</name>
</gene>
<comment type="function">
    <text evidence="1 2">Displays specific fusarinine C (FsC) esterase activity but does not hydrolyze triacetylfusarinine C (TAFC), which has the same core structure as fusarinine C (PubMed:24038704, PubMed:30070018). Both extra- and intracellular siderophores have been shown to be crucial for the virulence (PubMed:24038704). Subsequent to chelation of iron and uptake, FsC and TAFC are hydrolyzed and the iron is transferred to the metabolism or to the intracellular siderophore ferricrocin (FC) for transport and storage of iron (PubMed:24038704).</text>
</comment>
<comment type="catalytic activity">
    <reaction evidence="2">
        <text>fusarinine C + 3 H2O = 3 fusarinine + Fe(3+)</text>
        <dbReference type="Rhea" id="RHEA:82339"/>
        <dbReference type="ChEBI" id="CHEBI:15377"/>
        <dbReference type="ChEBI" id="CHEBI:29034"/>
        <dbReference type="ChEBI" id="CHEBI:232293"/>
        <dbReference type="ChEBI" id="CHEBI:232308"/>
    </reaction>
    <physiologicalReaction direction="left-to-right" evidence="2">
        <dbReference type="Rhea" id="RHEA:82340"/>
    </physiologicalReaction>
</comment>
<comment type="biophysicochemical properties">
    <kinetics>
        <KM evidence="2">419 uM for fusarinine C</KM>
        <Vmax evidence="2">3.1 umol/sec/mg enzyme towards fusarinine C</Vmax>
    </kinetics>
</comment>
<comment type="subunit">
    <text evidence="2">Homodimer.</text>
</comment>
<comment type="disruption phenotype">
    <text evidence="1">Leads to decreased growth and increased intracellular accumulation of hydrolysis products of the siderophore fusarinine C (PubMed:24038704).</text>
</comment>
<comment type="similarity">
    <text evidence="4">Belongs to the sidJ hydrolase family.</text>
</comment>
<dbReference type="EC" id="3.1.-.-" evidence="2"/>
<dbReference type="EMBL" id="AAHF01000010">
    <property type="protein sequence ID" value="EAL86621.1"/>
    <property type="molecule type" value="Genomic_DNA"/>
</dbReference>
<dbReference type="RefSeq" id="XP_748659.1">
    <property type="nucleotide sequence ID" value="XM_743566.1"/>
</dbReference>
<dbReference type="PDB" id="6GUP">
    <property type="method" value="X-ray"/>
    <property type="resolution" value="1.85 A"/>
    <property type="chains" value="A/B=2-354"/>
</dbReference>
<dbReference type="PDBsum" id="6GUP"/>
<dbReference type="SMR" id="Q4WF56"/>
<dbReference type="STRING" id="330879.Q4WF56"/>
<dbReference type="ESTHER" id="aspfu-q4wf56">
    <property type="family name" value="Fusarinine_C_esterase_sidJ"/>
</dbReference>
<dbReference type="EnsemblFungi" id="EAL86621">
    <property type="protein sequence ID" value="EAL86621"/>
    <property type="gene ID" value="AFUA_3G03390"/>
</dbReference>
<dbReference type="GeneID" id="3506151"/>
<dbReference type="KEGG" id="afm:AFUA_3G03390"/>
<dbReference type="eggNOG" id="KOG4840">
    <property type="taxonomic scope" value="Eukaryota"/>
</dbReference>
<dbReference type="HOGENOM" id="CLU_049633_3_0_1"/>
<dbReference type="InParanoid" id="Q4WF56"/>
<dbReference type="OMA" id="ALQPTEW"/>
<dbReference type="OrthoDB" id="10034502at2759"/>
<dbReference type="Proteomes" id="UP000002530">
    <property type="component" value="Chromosome 3"/>
</dbReference>
<dbReference type="GO" id="GO:0016787">
    <property type="term" value="F:hydrolase activity"/>
    <property type="evidence" value="ECO:0007669"/>
    <property type="project" value="UniProtKB-KW"/>
</dbReference>
<dbReference type="Gene3D" id="3.40.50.1820">
    <property type="entry name" value="alpha/beta hydrolase"/>
    <property type="match status" value="1"/>
</dbReference>
<dbReference type="InterPro" id="IPR029058">
    <property type="entry name" value="AB_hydrolase_fold"/>
</dbReference>
<dbReference type="InterPro" id="IPR013744">
    <property type="entry name" value="SidJ"/>
</dbReference>
<dbReference type="PANTHER" id="PTHR31591">
    <property type="entry name" value="UPF0613 PROTEIN PB24D3.06C"/>
    <property type="match status" value="1"/>
</dbReference>
<dbReference type="PANTHER" id="PTHR31591:SF1">
    <property type="entry name" value="UPF0613 PROTEIN PB24D3.06C"/>
    <property type="match status" value="1"/>
</dbReference>
<dbReference type="Pfam" id="PF08538">
    <property type="entry name" value="DUF1749"/>
    <property type="match status" value="1"/>
</dbReference>
<dbReference type="SUPFAM" id="SSF53474">
    <property type="entry name" value="alpha/beta-Hydrolases"/>
    <property type="match status" value="1"/>
</dbReference>
<accession>Q4WF56</accession>
<feature type="chain" id="PRO_0000444413" description="Fusarinine C esterase sidJ">
    <location>
        <begin position="1"/>
        <end position="354"/>
    </location>
</feature>
<feature type="strand" evidence="6">
    <location>
        <begin position="11"/>
        <end position="21"/>
    </location>
</feature>
<feature type="strand" evidence="6">
    <location>
        <begin position="23"/>
        <end position="27"/>
    </location>
</feature>
<feature type="strand" evidence="6">
    <location>
        <begin position="36"/>
        <end position="41"/>
    </location>
</feature>
<feature type="helix" evidence="6">
    <location>
        <begin position="54"/>
        <end position="60"/>
    </location>
</feature>
<feature type="strand" evidence="6">
    <location>
        <begin position="62"/>
        <end position="71"/>
    </location>
</feature>
<feature type="helix" evidence="6">
    <location>
        <begin position="74"/>
        <end position="77"/>
    </location>
</feature>
<feature type="helix" evidence="6">
    <location>
        <begin position="85"/>
        <end position="107"/>
    </location>
</feature>
<feature type="strand" evidence="6">
    <location>
        <begin position="116"/>
        <end position="121"/>
    </location>
</feature>
<feature type="helix" evidence="6">
    <location>
        <begin position="124"/>
        <end position="133"/>
    </location>
</feature>
<feature type="strand" evidence="6">
    <location>
        <begin position="156"/>
        <end position="163"/>
    </location>
</feature>
<feature type="helix" evidence="6">
    <location>
        <begin position="167"/>
        <end position="177"/>
    </location>
</feature>
<feature type="helix" evidence="6">
    <location>
        <begin position="184"/>
        <end position="204"/>
    </location>
</feature>
<feature type="strand" evidence="6">
    <location>
        <begin position="210"/>
        <end position="212"/>
    </location>
</feature>
<feature type="helix" evidence="6">
    <location>
        <begin position="215"/>
        <end position="221"/>
    </location>
</feature>
<feature type="helix" evidence="6">
    <location>
        <begin position="230"/>
        <end position="237"/>
    </location>
</feature>
<feature type="helix" evidence="6">
    <location>
        <begin position="257"/>
        <end position="261"/>
    </location>
</feature>
<feature type="helix" evidence="6">
    <location>
        <begin position="264"/>
        <end position="266"/>
    </location>
</feature>
<feature type="helix" evidence="6">
    <location>
        <begin position="267"/>
        <end position="270"/>
    </location>
</feature>
<feature type="strand" evidence="6">
    <location>
        <begin position="273"/>
        <end position="275"/>
    </location>
</feature>
<feature type="strand" evidence="6">
    <location>
        <begin position="277"/>
        <end position="282"/>
    </location>
</feature>
<feature type="helix" evidence="6">
    <location>
        <begin position="294"/>
        <end position="306"/>
    </location>
</feature>
<feature type="turn" evidence="6">
    <location>
        <begin position="307"/>
        <end position="310"/>
    </location>
</feature>
<feature type="strand" evidence="6">
    <location>
        <begin position="319"/>
        <end position="321"/>
    </location>
</feature>
<feature type="helix" evidence="6">
    <location>
        <begin position="334"/>
        <end position="352"/>
    </location>
</feature>
<evidence type="ECO:0000269" key="1">
    <source>
    </source>
</evidence>
<evidence type="ECO:0000269" key="2">
    <source>
    </source>
</evidence>
<evidence type="ECO:0000303" key="3">
    <source>
    </source>
</evidence>
<evidence type="ECO:0000305" key="4"/>
<evidence type="ECO:0007744" key="5">
    <source>
        <dbReference type="PDB" id="6GUP"/>
    </source>
</evidence>
<evidence type="ECO:0007829" key="6">
    <source>
        <dbReference type="PDB" id="6GUP"/>
    </source>
</evidence>
<proteinExistence type="evidence at protein level"/>
<organism>
    <name type="scientific">Aspergillus fumigatus (strain ATCC MYA-4609 / CBS 101355 / FGSC A1100 / Af293)</name>
    <name type="common">Neosartorya fumigata</name>
    <dbReference type="NCBI Taxonomy" id="330879"/>
    <lineage>
        <taxon>Eukaryota</taxon>
        <taxon>Fungi</taxon>
        <taxon>Dikarya</taxon>
        <taxon>Ascomycota</taxon>
        <taxon>Pezizomycotina</taxon>
        <taxon>Eurotiomycetes</taxon>
        <taxon>Eurotiomycetidae</taxon>
        <taxon>Eurotiales</taxon>
        <taxon>Aspergillaceae</taxon>
        <taxon>Aspergillus</taxon>
        <taxon>Aspergillus subgen. Fumigati</taxon>
    </lineage>
</organism>
<keyword id="KW-0002">3D-structure</keyword>
<keyword id="KW-0378">Hydrolase</keyword>
<keyword id="KW-1185">Reference proteome</keyword>
<name>SIDJ_ASPFU</name>
<reference key="1">
    <citation type="journal article" date="2005" name="Nature">
        <title>Genomic sequence of the pathogenic and allergenic filamentous fungus Aspergillus fumigatus.</title>
        <authorList>
            <person name="Nierman W.C."/>
            <person name="Pain A."/>
            <person name="Anderson M.J."/>
            <person name="Wortman J.R."/>
            <person name="Kim H.S."/>
            <person name="Arroyo J."/>
            <person name="Berriman M."/>
            <person name="Abe K."/>
            <person name="Archer D.B."/>
            <person name="Bermejo C."/>
            <person name="Bennett J.W."/>
            <person name="Bowyer P."/>
            <person name="Chen D."/>
            <person name="Collins M."/>
            <person name="Coulsen R."/>
            <person name="Davies R."/>
            <person name="Dyer P.S."/>
            <person name="Farman M.L."/>
            <person name="Fedorova N."/>
            <person name="Fedorova N.D."/>
            <person name="Feldblyum T.V."/>
            <person name="Fischer R."/>
            <person name="Fosker N."/>
            <person name="Fraser A."/>
            <person name="Garcia J.L."/>
            <person name="Garcia M.J."/>
            <person name="Goble A."/>
            <person name="Goldman G.H."/>
            <person name="Gomi K."/>
            <person name="Griffith-Jones S."/>
            <person name="Gwilliam R."/>
            <person name="Haas B.J."/>
            <person name="Haas H."/>
            <person name="Harris D.E."/>
            <person name="Horiuchi H."/>
            <person name="Huang J."/>
            <person name="Humphray S."/>
            <person name="Jimenez J."/>
            <person name="Keller N."/>
            <person name="Khouri H."/>
            <person name="Kitamoto K."/>
            <person name="Kobayashi T."/>
            <person name="Konzack S."/>
            <person name="Kulkarni R."/>
            <person name="Kumagai T."/>
            <person name="Lafton A."/>
            <person name="Latge J.-P."/>
            <person name="Li W."/>
            <person name="Lord A."/>
            <person name="Lu C."/>
            <person name="Majoros W.H."/>
            <person name="May G.S."/>
            <person name="Miller B.L."/>
            <person name="Mohamoud Y."/>
            <person name="Molina M."/>
            <person name="Monod M."/>
            <person name="Mouyna I."/>
            <person name="Mulligan S."/>
            <person name="Murphy L.D."/>
            <person name="O'Neil S."/>
            <person name="Paulsen I."/>
            <person name="Penalva M.A."/>
            <person name="Pertea M."/>
            <person name="Price C."/>
            <person name="Pritchard B.L."/>
            <person name="Quail M.A."/>
            <person name="Rabbinowitsch E."/>
            <person name="Rawlins N."/>
            <person name="Rajandream M.A."/>
            <person name="Reichard U."/>
            <person name="Renauld H."/>
            <person name="Robson G.D."/>
            <person name="Rodriguez de Cordoba S."/>
            <person name="Rodriguez-Pena J.M."/>
            <person name="Ronning C.M."/>
            <person name="Rutter S."/>
            <person name="Salzberg S.L."/>
            <person name="Sanchez M."/>
            <person name="Sanchez-Ferrero J.C."/>
            <person name="Saunders D."/>
            <person name="Seeger K."/>
            <person name="Squares R."/>
            <person name="Squares S."/>
            <person name="Takeuchi M."/>
            <person name="Tekaia F."/>
            <person name="Turner G."/>
            <person name="Vazquez de Aldana C.R."/>
            <person name="Weidman J."/>
            <person name="White O."/>
            <person name="Woodward J.R."/>
            <person name="Yu J.-H."/>
            <person name="Fraser C.M."/>
            <person name="Galagan J.E."/>
            <person name="Asai K."/>
            <person name="Machida M."/>
            <person name="Hall N."/>
            <person name="Barrell B.G."/>
            <person name="Denning D.W."/>
        </authorList>
    </citation>
    <scope>NUCLEOTIDE SEQUENCE [LARGE SCALE GENOMIC DNA]</scope>
    <source>
        <strain>ATCC MYA-4609 / CBS 101355 / FGSC A1100 / Af293</strain>
    </source>
</reference>
<reference key="2">
    <citation type="journal article" date="2013" name="Appl. Environ. Microbiol.">
        <title>Aspergillus fumigatus SidJ mediates intracellular siderophore hydrolysis.</title>
        <authorList>
            <person name="Gruendlinger M."/>
            <person name="Gsaller F."/>
            <person name="Schrettl M."/>
            <person name="Lindner H."/>
            <person name="Haas H."/>
        </authorList>
    </citation>
    <scope>FUNCTION</scope>
    <scope>DISRUPTION PHENOTYPE</scope>
</reference>
<reference evidence="5" key="3">
    <citation type="journal article" date="2018" name="Angew. Chem. Int. Ed.">
        <title>Iron Scavenging in Aspergillus Species: Structural and Biochemical Insights into Fungal Siderophore Esterases.</title>
        <authorList>
            <person name="Ecker F."/>
            <person name="Haas H."/>
            <person name="Groll M."/>
            <person name="Huber E.M."/>
        </authorList>
    </citation>
    <scope>X-RAY CRYSTALLOGRAPHY (1.85 ANGSTROMS) OF 2-354</scope>
    <scope>SUBUNIT</scope>
    <scope>FUNCTION</scope>
    <scope>CATALYTIC ACTIVITY</scope>
    <scope>BIOPHYSICOCHEMICAL PROPERTIES</scope>
</reference>
<sequence length="354" mass="38962">MYSKFWPKGGLPGILHHYTETLVTFEYTTTTTRKPHSLLFVGGLGDGLATTSYLADLAHALQPTEWSLFTLTLTSSYQSWGLGHLDRDTNEIAQCLKYIKEYKTEKFGGSASSGKIVLMGHSTGSQCVLHYLSRPNPHTHTPAFDPYLEHVERMPLDGAIMQAPVSDREAIQWVLAEGLGDRTPAEIRPVFEKLTSMAREAARDADAGTDVLLPLAMTSLVYPAHTPLSARRFLSLTSPESPESPSEDDLFSSDLSDEQLGKTFGMIREQGLLRGKLMVLFSGADQSVPAWVDKDTLLSRWRNATDHNGEAAIWDENSGIIPNASHALSNDDQAEPRNFLVNKVLGYLSALVKA</sequence>